<dbReference type="EC" id="4.1.2.-"/>
<dbReference type="EMBL" id="BA000022">
    <property type="protein sequence ID" value="BAA18808.1"/>
    <property type="status" value="ALT_INIT"/>
    <property type="molecule type" value="Genomic_DNA"/>
</dbReference>
<dbReference type="PIR" id="S76896">
    <property type="entry name" value="S76896"/>
</dbReference>
<dbReference type="SMR" id="P74690"/>
<dbReference type="STRING" id="1148.gene:10500580"/>
<dbReference type="PaxDb" id="1148-1653898"/>
<dbReference type="EnsemblBacteria" id="BAA18808">
    <property type="protein sequence ID" value="BAA18808"/>
    <property type="gene ID" value="BAA18808"/>
</dbReference>
<dbReference type="KEGG" id="syn:slr0453"/>
<dbReference type="eggNOG" id="COG3957">
    <property type="taxonomic scope" value="Bacteria"/>
</dbReference>
<dbReference type="InParanoid" id="P74690"/>
<dbReference type="PhylomeDB" id="P74690"/>
<dbReference type="BRENDA" id="4.1.2.9">
    <property type="organism ID" value="6192"/>
</dbReference>
<dbReference type="Proteomes" id="UP000001425">
    <property type="component" value="Chromosome"/>
</dbReference>
<dbReference type="GO" id="GO:0016832">
    <property type="term" value="F:aldehyde-lyase activity"/>
    <property type="evidence" value="ECO:0007669"/>
    <property type="project" value="UniProtKB-UniRule"/>
</dbReference>
<dbReference type="GO" id="GO:0005975">
    <property type="term" value="P:carbohydrate metabolic process"/>
    <property type="evidence" value="ECO:0007669"/>
    <property type="project" value="InterPro"/>
</dbReference>
<dbReference type="CDD" id="cd02011">
    <property type="entry name" value="TPP_PK"/>
    <property type="match status" value="1"/>
</dbReference>
<dbReference type="FunFam" id="3.40.50.970:FF:000091">
    <property type="entry name" value="Xylulose-5-phosphate/fructose-6-phosphate phosphoketolase"/>
    <property type="match status" value="1"/>
</dbReference>
<dbReference type="Gene3D" id="3.40.50.920">
    <property type="match status" value="1"/>
</dbReference>
<dbReference type="Gene3D" id="3.40.50.970">
    <property type="match status" value="2"/>
</dbReference>
<dbReference type="HAMAP" id="MF_01403">
    <property type="entry name" value="Phosphoketolase"/>
    <property type="match status" value="1"/>
</dbReference>
<dbReference type="InterPro" id="IPR023962">
    <property type="entry name" value="Phosphoketolase"/>
</dbReference>
<dbReference type="InterPro" id="IPR029061">
    <property type="entry name" value="THDP-binding"/>
</dbReference>
<dbReference type="InterPro" id="IPR009014">
    <property type="entry name" value="Transketo_C/PFOR_II"/>
</dbReference>
<dbReference type="InterPro" id="IPR005593">
    <property type="entry name" value="Xul5P/Fru6P_PKetolase"/>
</dbReference>
<dbReference type="InterPro" id="IPR018969">
    <property type="entry name" value="Xul5P/Fru6P_PKetolase_C"/>
</dbReference>
<dbReference type="InterPro" id="IPR019790">
    <property type="entry name" value="Xul5P/Fru6P_PKetolase_CS"/>
</dbReference>
<dbReference type="InterPro" id="IPR018970">
    <property type="entry name" value="Xul5P/Fru6P_PKetolase_N"/>
</dbReference>
<dbReference type="InterPro" id="IPR019789">
    <property type="entry name" value="Xul5P/Fru6P_PKetolase_ThDP_BS"/>
</dbReference>
<dbReference type="NCBIfam" id="NF003617">
    <property type="entry name" value="PRK05261.1-2"/>
    <property type="match status" value="1"/>
</dbReference>
<dbReference type="NCBIfam" id="NF003619">
    <property type="entry name" value="PRK05261.1-4"/>
    <property type="match status" value="1"/>
</dbReference>
<dbReference type="PANTHER" id="PTHR31273">
    <property type="entry name" value="PHOSPHOKETOLASE-RELATED"/>
    <property type="match status" value="1"/>
</dbReference>
<dbReference type="PANTHER" id="PTHR31273:SF0">
    <property type="entry name" value="PHOSPHOKETOLASE-RELATED"/>
    <property type="match status" value="1"/>
</dbReference>
<dbReference type="Pfam" id="PF03894">
    <property type="entry name" value="XFP"/>
    <property type="match status" value="1"/>
</dbReference>
<dbReference type="Pfam" id="PF09363">
    <property type="entry name" value="XFP_C"/>
    <property type="match status" value="1"/>
</dbReference>
<dbReference type="Pfam" id="PF09364">
    <property type="entry name" value="XFP_N"/>
    <property type="match status" value="1"/>
</dbReference>
<dbReference type="PIRSF" id="PIRSF017245">
    <property type="entry name" value="Phosphoketolase"/>
    <property type="match status" value="1"/>
</dbReference>
<dbReference type="SUPFAM" id="SSF52518">
    <property type="entry name" value="Thiamin diphosphate-binding fold (THDP-binding)"/>
    <property type="match status" value="2"/>
</dbReference>
<dbReference type="PROSITE" id="PS60002">
    <property type="entry name" value="PHOSPHOKETOLASE_1"/>
    <property type="match status" value="1"/>
</dbReference>
<dbReference type="PROSITE" id="PS60003">
    <property type="entry name" value="PHOSPHOKETOLASE_2"/>
    <property type="match status" value="1"/>
</dbReference>
<comment type="cofactor">
    <cofactor evidence="1">
        <name>thiamine diphosphate</name>
        <dbReference type="ChEBI" id="CHEBI:58937"/>
    </cofactor>
</comment>
<comment type="similarity">
    <text evidence="1">Belongs to the XFP family.</text>
</comment>
<comment type="sequence caution" evidence="1">
    <conflict type="erroneous initiation">
        <sequence resource="EMBL-CDS" id="BAA18808"/>
    </conflict>
</comment>
<keyword id="KW-0456">Lyase</keyword>
<keyword id="KW-1185">Reference proteome</keyword>
<keyword id="KW-0786">Thiamine pyrophosphate</keyword>
<sequence length="805" mass="90879">MVTSPFSLSPFGQARSTVTGNPLDPTELNQMHGFWRAANYLAVGMIYLRDNPLLREPLQPEQIKHRLLGHWGSSPGISFLYTHLNRIIRKFDQDMLYMVGPGHGAPGFLGPCYLEGSYSRFFAECSEDEDGMKRFFKQFSFPGGIGSHCTPETPGSIHEGGELGYCLSHAYGAAFDNPNLIVVGLAGDGESETGPLATSWHSNKFINPIRDGAVLPVLHLNGYKINNPSVLSRISHEELKALFEGYGYTPYFVEGSDPESMHQAMAATLDHCVSEIHQIQQEARSTGIAVRPRWPMVVMRTPKGWTGPDYVDGHKVEGFWRSHQVPMGGMHENPAHLQQLEAWMRSYKPEELFDEQGTLKPGFKAIAPEGDKRLGSTPYANGGLLRRGLKMPDFRQYGIDVDQPGTIEAPNTAPLGVFLRDVMANNMTNFRLFGPDENSSNKLHAVYEVSKKFWIAEYLEEDQDGGELSPDGRVMEMLSEHTLEGWLEAYLLTGRHGFFATYESFAHVITSMVNQHAKWLDICRHLNWRADISSLNILMTSTVWRQDHNGFTHQDPGFLDVILNKSPDVVRIYLPPDVNSLLSVADHCLQSKNYINIIVCDKQAHLQYQDMTSAIRNCTKGVDIWEWASNDAGTEPDVVMAAAGDIPTKEALAATAMLRQFFPNLRIRFVSVIDLLKLQPESEHPHGLSDRDFDSLFTTDKPIIFNFHAYPWLIHRLTYRRTNHGNLHVRGYKEKGNINTPMDLAIQNQIDRFSLAIDVIDRLPQLRVAGAHIKEMLKDMQIDCTNYAYEHGIDMPEIVNWRWPL</sequence>
<protein>
    <recommendedName>
        <fullName>Probable phosphoketolase</fullName>
        <ecNumber>4.1.2.-</ecNumber>
    </recommendedName>
</protein>
<proteinExistence type="inferred from homology"/>
<reference key="1">
    <citation type="journal article" date="1996" name="DNA Res.">
        <title>Sequence analysis of the genome of the unicellular cyanobacterium Synechocystis sp. strain PCC6803. II. Sequence determination of the entire genome and assignment of potential protein-coding regions.</title>
        <authorList>
            <person name="Kaneko T."/>
            <person name="Sato S."/>
            <person name="Kotani H."/>
            <person name="Tanaka A."/>
            <person name="Asamizu E."/>
            <person name="Nakamura Y."/>
            <person name="Miyajima N."/>
            <person name="Hirosawa M."/>
            <person name="Sugiura M."/>
            <person name="Sasamoto S."/>
            <person name="Kimura T."/>
            <person name="Hosouchi T."/>
            <person name="Matsuno A."/>
            <person name="Muraki A."/>
            <person name="Nakazaki N."/>
            <person name="Naruo K."/>
            <person name="Okumura S."/>
            <person name="Shimpo S."/>
            <person name="Takeuchi C."/>
            <person name="Wada T."/>
            <person name="Watanabe A."/>
            <person name="Yamada M."/>
            <person name="Yasuda M."/>
            <person name="Tabata S."/>
        </authorList>
    </citation>
    <scope>NUCLEOTIDE SEQUENCE [LARGE SCALE GENOMIC DNA]</scope>
    <source>
        <strain>ATCC 27184 / PCC 6803 / Kazusa</strain>
    </source>
</reference>
<organism>
    <name type="scientific">Synechocystis sp. (strain ATCC 27184 / PCC 6803 / Kazusa)</name>
    <dbReference type="NCBI Taxonomy" id="1111708"/>
    <lineage>
        <taxon>Bacteria</taxon>
        <taxon>Bacillati</taxon>
        <taxon>Cyanobacteriota</taxon>
        <taxon>Cyanophyceae</taxon>
        <taxon>Synechococcales</taxon>
        <taxon>Merismopediaceae</taxon>
        <taxon>Synechocystis</taxon>
    </lineage>
</organism>
<accession>P74690</accession>
<evidence type="ECO:0000305" key="1"/>
<feature type="chain" id="PRO_0000193894" description="Probable phosphoketolase">
    <location>
        <begin position="1"/>
        <end position="805"/>
    </location>
</feature>
<gene>
    <name type="ordered locus">slr0453</name>
</gene>
<name>PHK_SYNY3</name>